<organism>
    <name type="scientific">Aedes aegypti</name>
    <name type="common">Yellowfever mosquito</name>
    <name type="synonym">Culex aegypti</name>
    <dbReference type="NCBI Taxonomy" id="7159"/>
    <lineage>
        <taxon>Eukaryota</taxon>
        <taxon>Metazoa</taxon>
        <taxon>Ecdysozoa</taxon>
        <taxon>Arthropoda</taxon>
        <taxon>Hexapoda</taxon>
        <taxon>Insecta</taxon>
        <taxon>Pterygota</taxon>
        <taxon>Neoptera</taxon>
        <taxon>Endopterygota</taxon>
        <taxon>Diptera</taxon>
        <taxon>Nematocera</taxon>
        <taxon>Culicoidea</taxon>
        <taxon>Culicidae</taxon>
        <taxon>Culicinae</taxon>
        <taxon>Aedini</taxon>
        <taxon>Aedes</taxon>
        <taxon>Stegomyia</taxon>
    </lineage>
</organism>
<name>MMSA_AEDAE</name>
<comment type="function">
    <text evidence="3">Probable malonate and methylmalonate semialdehyde dehydrogenase involved in the catabolism of valine, thymine, and compounds catabolized by way of beta-alanine, including uracil and cytidine.</text>
</comment>
<comment type="catalytic activity">
    <reaction evidence="3">
        <text>2-methyl-3-oxopropanoate + NAD(+) + CoA + H2O = propanoyl-CoA + hydrogencarbonate + NADH + H(+)</text>
        <dbReference type="Rhea" id="RHEA:20804"/>
        <dbReference type="ChEBI" id="CHEBI:15377"/>
        <dbReference type="ChEBI" id="CHEBI:15378"/>
        <dbReference type="ChEBI" id="CHEBI:17544"/>
        <dbReference type="ChEBI" id="CHEBI:57287"/>
        <dbReference type="ChEBI" id="CHEBI:57392"/>
        <dbReference type="ChEBI" id="CHEBI:57540"/>
        <dbReference type="ChEBI" id="CHEBI:57700"/>
        <dbReference type="ChEBI" id="CHEBI:57945"/>
        <dbReference type="EC" id="1.2.1.27"/>
    </reaction>
    <physiologicalReaction direction="left-to-right" evidence="3">
        <dbReference type="Rhea" id="RHEA:20805"/>
    </physiologicalReaction>
</comment>
<comment type="catalytic activity">
    <reaction evidence="3">
        <text>3-oxopropanoate + NAD(+) + CoA + H2O = hydrogencarbonate + acetyl-CoA + NADH + H(+)</text>
        <dbReference type="Rhea" id="RHEA:76615"/>
        <dbReference type="ChEBI" id="CHEBI:15377"/>
        <dbReference type="ChEBI" id="CHEBI:15378"/>
        <dbReference type="ChEBI" id="CHEBI:17544"/>
        <dbReference type="ChEBI" id="CHEBI:33190"/>
        <dbReference type="ChEBI" id="CHEBI:57287"/>
        <dbReference type="ChEBI" id="CHEBI:57288"/>
        <dbReference type="ChEBI" id="CHEBI:57540"/>
        <dbReference type="ChEBI" id="CHEBI:57945"/>
        <dbReference type="EC" id="1.2.1.27"/>
    </reaction>
    <physiologicalReaction direction="left-to-right" evidence="3">
        <dbReference type="Rhea" id="RHEA:76616"/>
    </physiologicalReaction>
</comment>
<comment type="subunit">
    <text evidence="3">Homotetramer.</text>
</comment>
<comment type="subcellular location">
    <subcellularLocation>
        <location evidence="3">Mitochondrion</location>
    </subcellularLocation>
</comment>
<comment type="similarity">
    <text evidence="4">Belongs to the aldehyde dehydrogenase family.</text>
</comment>
<gene>
    <name type="ORF">AAEL001134</name>
</gene>
<protein>
    <recommendedName>
        <fullName evidence="3">Probable methylmalonate-semialdehyde/malonate-semialdehyde dehydrogenase [acylating], mitochondrial</fullName>
        <shortName evidence="3">MMSDH</shortName>
        <ecNumber evidence="3">1.2.1.27</ecNumber>
    </recommendedName>
    <alternativeName>
        <fullName evidence="3">Malonate-semialdehyde dehydrogenase [acylating]</fullName>
    </alternativeName>
</protein>
<evidence type="ECO:0000250" key="1">
    <source>
        <dbReference type="UniProtKB" id="P42412"/>
    </source>
</evidence>
<evidence type="ECO:0000250" key="2">
    <source>
        <dbReference type="UniProtKB" id="Q02252"/>
    </source>
</evidence>
<evidence type="ECO:0000250" key="3">
    <source>
        <dbReference type="UniProtKB" id="Q02253"/>
    </source>
</evidence>
<evidence type="ECO:0000255" key="4"/>
<evidence type="ECO:0000255" key="5">
    <source>
        <dbReference type="PROSITE-ProRule" id="PRU10008"/>
    </source>
</evidence>
<evidence type="ECO:0000312" key="6">
    <source>
        <dbReference type="EMBL" id="EAT47764.1"/>
    </source>
</evidence>
<sequence length="521" mass="56572">MALVRLLGVECRNALQRSYSTASVPTTKMFIDGKFVDSKTTEWIDLHDPATNKVVTRVPKCTQDEMESAVESSKKAFKTWSQTSILGRQQVMFKLQHLIRNNMSELAKNITKEQGKTLVDAEGDVLRGLQVVEHCCSITSLQMGETVPNIAKDMDTYSYTLPLGVTAGICPFNFPAMIPLWMFPVAITCGNTSIIKPSERVPGATMMLMELLNEAGCPPGVVNVIHGAHDAVNFICDNPTIKAVSFVGSDQAGKYIYERAGRNGKRVQSNMGAKNHGVIMADANKENTLNQLAGAAFGAAGQRCMALSTAVFVGEAKQWIPDLVERARKLKVNAGHVPGTDVGPVISPQSKQRINELVESGVKEGAKLVLDGRSIKVENFENGNFVGPTILTDVSTNMKCYTEEIFGPVLVCLTVDTVDEAVEMINNNPYGNGTAIFTTNGATARKFVNEIDVGQVGVNVPIPVPLPMFSFTGSRGSFMGDCHFYGKQGVKFYTQTKTVTQLWREGDVSHTKAAVAMPTMK</sequence>
<accession>Q17M80</accession>
<dbReference type="EC" id="1.2.1.27" evidence="3"/>
<dbReference type="EMBL" id="CH477208">
    <property type="protein sequence ID" value="EAT47764.1"/>
    <property type="molecule type" value="Genomic_DNA"/>
</dbReference>
<dbReference type="SMR" id="Q17M80"/>
<dbReference type="FunCoup" id="Q17M80">
    <property type="interactions" value="1207"/>
</dbReference>
<dbReference type="STRING" id="7159.Q17M80"/>
<dbReference type="PaxDb" id="7159-AAEL001134-PA"/>
<dbReference type="EnsemblMetazoa" id="AAEL001134-RA">
    <property type="protein sequence ID" value="AAEL001134-PA"/>
    <property type="gene ID" value="AAEL001134"/>
</dbReference>
<dbReference type="GeneID" id="5568558"/>
<dbReference type="KEGG" id="aag:5568558"/>
<dbReference type="VEuPathDB" id="VectorBase:AAEL001134"/>
<dbReference type="eggNOG" id="KOG2449">
    <property type="taxonomic scope" value="Eukaryota"/>
</dbReference>
<dbReference type="HOGENOM" id="CLU_005391_1_10_1"/>
<dbReference type="InParanoid" id="Q17M80"/>
<dbReference type="OMA" id="GGAKNHI"/>
<dbReference type="OrthoDB" id="310895at2759"/>
<dbReference type="PhylomeDB" id="Q17M80"/>
<dbReference type="Proteomes" id="UP000008820">
    <property type="component" value="Chromosome 3"/>
</dbReference>
<dbReference type="Proteomes" id="UP000682892">
    <property type="component" value="Unassembled WGS sequence"/>
</dbReference>
<dbReference type="GO" id="GO:0005739">
    <property type="term" value="C:mitochondrion"/>
    <property type="evidence" value="ECO:0007669"/>
    <property type="project" value="UniProtKB-SubCell"/>
</dbReference>
<dbReference type="GO" id="GO:0018478">
    <property type="term" value="F:malonate-semialdehyde dehydrogenase (acetylating) activity"/>
    <property type="evidence" value="ECO:0007669"/>
    <property type="project" value="UniProtKB-EC"/>
</dbReference>
<dbReference type="GO" id="GO:0004491">
    <property type="term" value="F:methylmalonate-semialdehyde dehydrogenase (acylating, NAD) activity"/>
    <property type="evidence" value="ECO:0000250"/>
    <property type="project" value="UniProtKB"/>
</dbReference>
<dbReference type="GO" id="GO:0006210">
    <property type="term" value="P:thymine catabolic process"/>
    <property type="evidence" value="ECO:0007669"/>
    <property type="project" value="TreeGrafter"/>
</dbReference>
<dbReference type="GO" id="GO:0019859">
    <property type="term" value="P:thymine metabolic process"/>
    <property type="evidence" value="ECO:0000250"/>
    <property type="project" value="UniProtKB"/>
</dbReference>
<dbReference type="GO" id="GO:0006574">
    <property type="term" value="P:valine catabolic process"/>
    <property type="evidence" value="ECO:0007669"/>
    <property type="project" value="TreeGrafter"/>
</dbReference>
<dbReference type="GO" id="GO:0006573">
    <property type="term" value="P:valine metabolic process"/>
    <property type="evidence" value="ECO:0000250"/>
    <property type="project" value="UniProtKB"/>
</dbReference>
<dbReference type="CDD" id="cd07085">
    <property type="entry name" value="ALDH_F6_MMSDH"/>
    <property type="match status" value="1"/>
</dbReference>
<dbReference type="FunFam" id="3.40.309.10:FF:000002">
    <property type="entry name" value="Methylmalonate-semialdehyde dehydrogenase (Acylating)"/>
    <property type="match status" value="1"/>
</dbReference>
<dbReference type="FunFam" id="3.40.605.10:FF:000003">
    <property type="entry name" value="Methylmalonate-semialdehyde dehydrogenase [acylating]"/>
    <property type="match status" value="1"/>
</dbReference>
<dbReference type="Gene3D" id="3.40.605.10">
    <property type="entry name" value="Aldehyde Dehydrogenase, Chain A, domain 1"/>
    <property type="match status" value="1"/>
</dbReference>
<dbReference type="Gene3D" id="3.40.309.10">
    <property type="entry name" value="Aldehyde Dehydrogenase, Chain A, domain 2"/>
    <property type="match status" value="1"/>
</dbReference>
<dbReference type="InterPro" id="IPR016161">
    <property type="entry name" value="Ald_DH/histidinol_DH"/>
</dbReference>
<dbReference type="InterPro" id="IPR016163">
    <property type="entry name" value="Ald_DH_C"/>
</dbReference>
<dbReference type="InterPro" id="IPR016160">
    <property type="entry name" value="Ald_DH_CS_CYS"/>
</dbReference>
<dbReference type="InterPro" id="IPR016162">
    <property type="entry name" value="Ald_DH_N"/>
</dbReference>
<dbReference type="InterPro" id="IPR015590">
    <property type="entry name" value="Aldehyde_DH_dom"/>
</dbReference>
<dbReference type="InterPro" id="IPR010061">
    <property type="entry name" value="MeMal-semiAld_DH"/>
</dbReference>
<dbReference type="NCBIfam" id="TIGR01722">
    <property type="entry name" value="MMSDH"/>
    <property type="match status" value="1"/>
</dbReference>
<dbReference type="PANTHER" id="PTHR43866">
    <property type="entry name" value="MALONATE-SEMIALDEHYDE DEHYDROGENASE"/>
    <property type="match status" value="1"/>
</dbReference>
<dbReference type="PANTHER" id="PTHR43866:SF3">
    <property type="entry name" value="METHYLMALONATE-SEMIALDEHYDE DEHYDROGENASE [ACYLATING], MITOCHONDRIAL"/>
    <property type="match status" value="1"/>
</dbReference>
<dbReference type="Pfam" id="PF00171">
    <property type="entry name" value="Aldedh"/>
    <property type="match status" value="1"/>
</dbReference>
<dbReference type="SUPFAM" id="SSF53720">
    <property type="entry name" value="ALDH-like"/>
    <property type="match status" value="1"/>
</dbReference>
<dbReference type="PROSITE" id="PS00070">
    <property type="entry name" value="ALDEHYDE_DEHYDR_CYS"/>
    <property type="match status" value="1"/>
</dbReference>
<keyword id="KW-0496">Mitochondrion</keyword>
<keyword id="KW-0520">NAD</keyword>
<keyword id="KW-0560">Oxidoreductase</keyword>
<keyword id="KW-1185">Reference proteome</keyword>
<keyword id="KW-0809">Transit peptide</keyword>
<proteinExistence type="inferred from homology"/>
<reference evidence="6" key="1">
    <citation type="journal article" date="2007" name="Science">
        <title>Genome sequence of Aedes aegypti, a major arbovirus vector.</title>
        <authorList>
            <person name="Nene V."/>
            <person name="Wortman J.R."/>
            <person name="Lawson D."/>
            <person name="Haas B.J."/>
            <person name="Kodira C.D."/>
            <person name="Tu Z.J."/>
            <person name="Loftus B.J."/>
            <person name="Xi Z."/>
            <person name="Megy K."/>
            <person name="Grabherr M."/>
            <person name="Ren Q."/>
            <person name="Zdobnov E.M."/>
            <person name="Lobo N.F."/>
            <person name="Campbell K.S."/>
            <person name="Brown S.E."/>
            <person name="Bonaldo M.F."/>
            <person name="Zhu J."/>
            <person name="Sinkins S.P."/>
            <person name="Hogenkamp D.G."/>
            <person name="Amedeo P."/>
            <person name="Arensburger P."/>
            <person name="Atkinson P.W."/>
            <person name="Bidwell S.L."/>
            <person name="Biedler J."/>
            <person name="Birney E."/>
            <person name="Bruggner R.V."/>
            <person name="Costas J."/>
            <person name="Coy M.R."/>
            <person name="Crabtree J."/>
            <person name="Crawford M."/>
            <person name="DeBruyn B."/>
            <person name="DeCaprio D."/>
            <person name="Eiglmeier K."/>
            <person name="Eisenstadt E."/>
            <person name="El-Dorry H."/>
            <person name="Gelbart W.M."/>
            <person name="Gomes S.L."/>
            <person name="Hammond M."/>
            <person name="Hannick L.I."/>
            <person name="Hogan J.R."/>
            <person name="Holmes M.H."/>
            <person name="Jaffe D."/>
            <person name="Johnston S.J."/>
            <person name="Kennedy R.C."/>
            <person name="Koo H."/>
            <person name="Kravitz S."/>
            <person name="Kriventseva E.V."/>
            <person name="Kulp D."/>
            <person name="Labutti K."/>
            <person name="Lee E."/>
            <person name="Li S."/>
            <person name="Lovin D.D."/>
            <person name="Mao C."/>
            <person name="Mauceli E."/>
            <person name="Menck C.F."/>
            <person name="Miller J.R."/>
            <person name="Montgomery P."/>
            <person name="Mori A."/>
            <person name="Nascimento A.L."/>
            <person name="Naveira H.F."/>
            <person name="Nusbaum C."/>
            <person name="O'Leary S.B."/>
            <person name="Orvis J."/>
            <person name="Pertea M."/>
            <person name="Quesneville H."/>
            <person name="Reidenbach K.R."/>
            <person name="Rogers Y.-H.C."/>
            <person name="Roth C.W."/>
            <person name="Schneider J.R."/>
            <person name="Schatz M."/>
            <person name="Shumway M."/>
            <person name="Stanke M."/>
            <person name="Stinson E.O."/>
            <person name="Tubio J.M.C."/>
            <person name="Vanzee J.P."/>
            <person name="Verjovski-Almeida S."/>
            <person name="Werner D."/>
            <person name="White O.R."/>
            <person name="Wyder S."/>
            <person name="Zeng Q."/>
            <person name="Zhao Q."/>
            <person name="Zhao Y."/>
            <person name="Hill C.A."/>
            <person name="Raikhel A.S."/>
            <person name="Soares M.B."/>
            <person name="Knudson D.L."/>
            <person name="Lee N.H."/>
            <person name="Galagan J."/>
            <person name="Salzberg S.L."/>
            <person name="Paulsen I.T."/>
            <person name="Dimopoulos G."/>
            <person name="Collins F.H."/>
            <person name="Bruce B."/>
            <person name="Fraser-Liggett C.M."/>
            <person name="Severson D.W."/>
        </authorList>
    </citation>
    <scope>NUCLEOTIDE SEQUENCE [LARGE SCALE GENOMIC DNA]</scope>
    <source>
        <strain>LVPib12</strain>
    </source>
</reference>
<feature type="transit peptide" description="Mitochondrion" evidence="4">
    <location>
        <begin position="1"/>
        <end status="unknown"/>
    </location>
</feature>
<feature type="chain" id="PRO_0000312823" description="Probable methylmalonate-semialdehyde/malonate-semialdehyde dehydrogenase [acylating], mitochondrial">
    <location>
        <begin status="unknown"/>
        <end position="521"/>
    </location>
</feature>
<feature type="active site" description="Nucleophile" evidence="2 5">
    <location>
        <position position="304"/>
    </location>
</feature>
<feature type="binding site" evidence="1">
    <location>
        <position position="172"/>
    </location>
    <ligand>
        <name>NAD(+)</name>
        <dbReference type="ChEBI" id="CHEBI:57540"/>
    </ligand>
</feature>
<feature type="binding site" evidence="1">
    <location>
        <position position="196"/>
    </location>
    <ligand>
        <name>NAD(+)</name>
        <dbReference type="ChEBI" id="CHEBI:57540"/>
    </ligand>
</feature>
<feature type="binding site" evidence="1">
    <location>
        <position position="199"/>
    </location>
    <ligand>
        <name>NAD(+)</name>
        <dbReference type="ChEBI" id="CHEBI:57540"/>
    </ligand>
</feature>
<feature type="binding site" evidence="1">
    <location>
        <position position="200"/>
    </location>
    <ligand>
        <name>NAD(+)</name>
        <dbReference type="ChEBI" id="CHEBI:57540"/>
    </ligand>
</feature>
<feature type="binding site" evidence="1">
    <location>
        <position position="249"/>
    </location>
    <ligand>
        <name>NAD(+)</name>
        <dbReference type="ChEBI" id="CHEBI:57540"/>
    </ligand>
</feature>
<feature type="binding site" evidence="1">
    <location>
        <position position="404"/>
    </location>
    <ligand>
        <name>NAD(+)</name>
        <dbReference type="ChEBI" id="CHEBI:57540"/>
    </ligand>
</feature>